<name>TRMD_STRE4</name>
<organism>
    <name type="scientific">Streptococcus equi subsp. equi (strain 4047)</name>
    <dbReference type="NCBI Taxonomy" id="553482"/>
    <lineage>
        <taxon>Bacteria</taxon>
        <taxon>Bacillati</taxon>
        <taxon>Bacillota</taxon>
        <taxon>Bacilli</taxon>
        <taxon>Lactobacillales</taxon>
        <taxon>Streptococcaceae</taxon>
        <taxon>Streptococcus</taxon>
    </lineage>
</organism>
<protein>
    <recommendedName>
        <fullName evidence="1">tRNA (guanine-N(1)-)-methyltransferase</fullName>
        <ecNumber evidence="1">2.1.1.228</ecNumber>
    </recommendedName>
    <alternativeName>
        <fullName evidence="1">M1G-methyltransferase</fullName>
    </alternativeName>
    <alternativeName>
        <fullName evidence="1">tRNA [GM37] methyltransferase</fullName>
    </alternativeName>
</protein>
<proteinExistence type="inferred from homology"/>
<gene>
    <name evidence="1" type="primary">trmD</name>
    <name type="ordered locus">SEQ_1305</name>
</gene>
<sequence length="243" mass="27859">MKIDILTLFPEMFAPLEHSIVGKAKEKGLLDIHYHNFRDHAEKARHVDDEPYGGGQGMLLRAQPIFDTMDSIQATKPRVILLDPAGKPFHQSYAEELALEEELIFICGHYEGYDERIKTLVTDEISLGDFVLTGGELAAMTMIDATVRLIPNVLGKQASHQEDSFSSGLLEYPQYTRPYDYRGMKVPDVLMSGHHEHIRLWRMEQSLKKTYLRRPDLLETYDFSDEEKRIFDKIKSGLSEGEN</sequence>
<dbReference type="EC" id="2.1.1.228" evidence="1"/>
<dbReference type="EMBL" id="FM204883">
    <property type="protein sequence ID" value="CAW94081.1"/>
    <property type="molecule type" value="Genomic_DNA"/>
</dbReference>
<dbReference type="RefSeq" id="WP_012679658.1">
    <property type="nucleotide sequence ID" value="NC_012471.1"/>
</dbReference>
<dbReference type="SMR" id="C0M748"/>
<dbReference type="KEGG" id="seu:SEQ_1305"/>
<dbReference type="HOGENOM" id="CLU_047363_0_1_9"/>
<dbReference type="OrthoDB" id="9807416at2"/>
<dbReference type="Proteomes" id="UP000001365">
    <property type="component" value="Chromosome"/>
</dbReference>
<dbReference type="GO" id="GO:0005829">
    <property type="term" value="C:cytosol"/>
    <property type="evidence" value="ECO:0007669"/>
    <property type="project" value="TreeGrafter"/>
</dbReference>
<dbReference type="GO" id="GO:0052906">
    <property type="term" value="F:tRNA (guanine(37)-N1)-methyltransferase activity"/>
    <property type="evidence" value="ECO:0007669"/>
    <property type="project" value="UniProtKB-UniRule"/>
</dbReference>
<dbReference type="GO" id="GO:0002939">
    <property type="term" value="P:tRNA N1-guanine methylation"/>
    <property type="evidence" value="ECO:0007669"/>
    <property type="project" value="TreeGrafter"/>
</dbReference>
<dbReference type="CDD" id="cd18080">
    <property type="entry name" value="TrmD-like"/>
    <property type="match status" value="1"/>
</dbReference>
<dbReference type="FunFam" id="1.10.1270.20:FF:000001">
    <property type="entry name" value="tRNA (guanine-N(1)-)-methyltransferase"/>
    <property type="match status" value="1"/>
</dbReference>
<dbReference type="FunFam" id="3.40.1280.10:FF:000001">
    <property type="entry name" value="tRNA (guanine-N(1)-)-methyltransferase"/>
    <property type="match status" value="1"/>
</dbReference>
<dbReference type="Gene3D" id="3.40.1280.10">
    <property type="match status" value="1"/>
</dbReference>
<dbReference type="Gene3D" id="1.10.1270.20">
    <property type="entry name" value="tRNA(m1g37)methyltransferase, domain 2"/>
    <property type="match status" value="1"/>
</dbReference>
<dbReference type="HAMAP" id="MF_00605">
    <property type="entry name" value="TrmD"/>
    <property type="match status" value="1"/>
</dbReference>
<dbReference type="InterPro" id="IPR029028">
    <property type="entry name" value="Alpha/beta_knot_MTases"/>
</dbReference>
<dbReference type="InterPro" id="IPR023148">
    <property type="entry name" value="tRNA_m1G_MeTrfase_C_sf"/>
</dbReference>
<dbReference type="InterPro" id="IPR002649">
    <property type="entry name" value="tRNA_m1G_MeTrfase_TrmD"/>
</dbReference>
<dbReference type="InterPro" id="IPR029026">
    <property type="entry name" value="tRNA_m1G_MTases_N"/>
</dbReference>
<dbReference type="InterPro" id="IPR016009">
    <property type="entry name" value="tRNA_MeTrfase_TRMD/TRM10"/>
</dbReference>
<dbReference type="NCBIfam" id="NF000648">
    <property type="entry name" value="PRK00026.1"/>
    <property type="match status" value="1"/>
</dbReference>
<dbReference type="NCBIfam" id="TIGR00088">
    <property type="entry name" value="trmD"/>
    <property type="match status" value="1"/>
</dbReference>
<dbReference type="PANTHER" id="PTHR46417">
    <property type="entry name" value="TRNA (GUANINE-N(1)-)-METHYLTRANSFERASE"/>
    <property type="match status" value="1"/>
</dbReference>
<dbReference type="PANTHER" id="PTHR46417:SF1">
    <property type="entry name" value="TRNA (GUANINE-N(1)-)-METHYLTRANSFERASE"/>
    <property type="match status" value="1"/>
</dbReference>
<dbReference type="Pfam" id="PF01746">
    <property type="entry name" value="tRNA_m1G_MT"/>
    <property type="match status" value="1"/>
</dbReference>
<dbReference type="PIRSF" id="PIRSF000386">
    <property type="entry name" value="tRNA_mtase"/>
    <property type="match status" value="1"/>
</dbReference>
<dbReference type="SUPFAM" id="SSF75217">
    <property type="entry name" value="alpha/beta knot"/>
    <property type="match status" value="1"/>
</dbReference>
<reference key="1">
    <citation type="journal article" date="2009" name="PLoS Pathog.">
        <title>Genomic evidence for the evolution of Streptococcus equi: host restriction, increased virulence, and genetic exchange with human pathogens.</title>
        <authorList>
            <person name="Holden M.T.G."/>
            <person name="Heather Z."/>
            <person name="Paillot R."/>
            <person name="Steward K.F."/>
            <person name="Webb K."/>
            <person name="Ainslie F."/>
            <person name="Jourdan T."/>
            <person name="Bason N.C."/>
            <person name="Holroyd N.E."/>
            <person name="Mungall K."/>
            <person name="Quail M.A."/>
            <person name="Sanders M."/>
            <person name="Simmonds M."/>
            <person name="Willey D."/>
            <person name="Brooks K."/>
            <person name="Aanensen D.M."/>
            <person name="Spratt B.G."/>
            <person name="Jolley K.A."/>
            <person name="Maiden M.C.J."/>
            <person name="Kehoe M."/>
            <person name="Chanter N."/>
            <person name="Bentley S.D."/>
            <person name="Robinson C."/>
            <person name="Maskell D.J."/>
            <person name="Parkhill J."/>
            <person name="Waller A.S."/>
        </authorList>
    </citation>
    <scope>NUCLEOTIDE SEQUENCE [LARGE SCALE GENOMIC DNA]</scope>
    <source>
        <strain>4047</strain>
    </source>
</reference>
<evidence type="ECO:0000255" key="1">
    <source>
        <dbReference type="HAMAP-Rule" id="MF_00605"/>
    </source>
</evidence>
<comment type="function">
    <text evidence="1">Specifically methylates guanosine-37 in various tRNAs.</text>
</comment>
<comment type="catalytic activity">
    <reaction evidence="1">
        <text>guanosine(37) in tRNA + S-adenosyl-L-methionine = N(1)-methylguanosine(37) in tRNA + S-adenosyl-L-homocysteine + H(+)</text>
        <dbReference type="Rhea" id="RHEA:36899"/>
        <dbReference type="Rhea" id="RHEA-COMP:10145"/>
        <dbReference type="Rhea" id="RHEA-COMP:10147"/>
        <dbReference type="ChEBI" id="CHEBI:15378"/>
        <dbReference type="ChEBI" id="CHEBI:57856"/>
        <dbReference type="ChEBI" id="CHEBI:59789"/>
        <dbReference type="ChEBI" id="CHEBI:73542"/>
        <dbReference type="ChEBI" id="CHEBI:74269"/>
        <dbReference type="EC" id="2.1.1.228"/>
    </reaction>
</comment>
<comment type="subunit">
    <text evidence="1">Homodimer.</text>
</comment>
<comment type="subcellular location">
    <subcellularLocation>
        <location evidence="1">Cytoplasm</location>
    </subcellularLocation>
</comment>
<comment type="similarity">
    <text evidence="1">Belongs to the RNA methyltransferase TrmD family.</text>
</comment>
<accession>C0M748</accession>
<keyword id="KW-0963">Cytoplasm</keyword>
<keyword id="KW-0489">Methyltransferase</keyword>
<keyword id="KW-0949">S-adenosyl-L-methionine</keyword>
<keyword id="KW-0808">Transferase</keyword>
<keyword id="KW-0819">tRNA processing</keyword>
<feature type="chain" id="PRO_1000198585" description="tRNA (guanine-N(1)-)-methyltransferase">
    <location>
        <begin position="1"/>
        <end position="243"/>
    </location>
</feature>
<feature type="binding site" evidence="1">
    <location>
        <position position="108"/>
    </location>
    <ligand>
        <name>S-adenosyl-L-methionine</name>
        <dbReference type="ChEBI" id="CHEBI:59789"/>
    </ligand>
</feature>
<feature type="binding site" evidence="1">
    <location>
        <begin position="127"/>
        <end position="132"/>
    </location>
    <ligand>
        <name>S-adenosyl-L-methionine</name>
        <dbReference type="ChEBI" id="CHEBI:59789"/>
    </ligand>
</feature>